<accession>O87389</accession>
<organism>
    <name type="scientific">Rhizobium meliloti (strain 1021)</name>
    <name type="common">Ensifer meliloti</name>
    <name type="synonym">Sinorhizobium meliloti</name>
    <dbReference type="NCBI Taxonomy" id="266834"/>
    <lineage>
        <taxon>Bacteria</taxon>
        <taxon>Pseudomonadati</taxon>
        <taxon>Pseudomonadota</taxon>
        <taxon>Alphaproteobacteria</taxon>
        <taxon>Hyphomicrobiales</taxon>
        <taxon>Rhizobiaceae</taxon>
        <taxon>Sinorhizobium/Ensifer group</taxon>
        <taxon>Sinorhizobium</taxon>
    </lineage>
</organism>
<evidence type="ECO:0000255" key="1">
    <source>
        <dbReference type="PROSITE-ProRule" id="PRU00593"/>
    </source>
</evidence>
<sequence length="324" mass="34960">MAASSDSRNVQRIGFLLVRNFALMSYASATEPLRAANLLAGRPLYQIVPLAPGGGTVASSSGLSVGCADLESEGESCHTVFVCAGGEPTDWADTSASHTTLRRLSRLGIRIGGISSGAFVLAAAGLLDNRDFTIHWEHAPALKEAFPHLNPRHARFVLDGGIATCGGGVAPLDMMHAMIAERLGTDFARRVSDWYLHAAVAEPAAPQRGSAAERFGTNHPALLAVLEKMETAIERPLDRTAMARLAGVSPRHLDRLFREHRGTGFLDTYREIRLRHARRLLQQSPLSIPEIAYATGFSSPAHFSNAFKRLFSQTPGSLRRRSGS</sequence>
<reference key="1">
    <citation type="submission" date="1998-03" db="EMBL/GenBank/DDBJ databases">
        <authorList>
            <person name="Powers E.L."/>
            <person name="Vuyyuru V."/>
            <person name="Kahn M.L."/>
        </authorList>
    </citation>
    <scope>NUCLEOTIDE SEQUENCE [GENOMIC DNA]</scope>
    <source>
        <strain>1021</strain>
    </source>
</reference>
<reference key="2">
    <citation type="journal article" date="2001" name="Proc. Natl. Acad. Sci. U.S.A.">
        <title>Analysis of the chromosome sequence of the legume symbiont Sinorhizobium meliloti strain 1021.</title>
        <authorList>
            <person name="Capela D."/>
            <person name="Barloy-Hubler F."/>
            <person name="Gouzy J."/>
            <person name="Bothe G."/>
            <person name="Ampe F."/>
            <person name="Batut J."/>
            <person name="Boistard P."/>
            <person name="Becker A."/>
            <person name="Boutry M."/>
            <person name="Cadieu E."/>
            <person name="Dreano S."/>
            <person name="Gloux S."/>
            <person name="Godrie T."/>
            <person name="Goffeau A."/>
            <person name="Kahn D."/>
            <person name="Kiss E."/>
            <person name="Lelaure V."/>
            <person name="Masuy D."/>
            <person name="Pohl T."/>
            <person name="Portetelle D."/>
            <person name="Puehler A."/>
            <person name="Purnelle B."/>
            <person name="Ramsperger U."/>
            <person name="Renard C."/>
            <person name="Thebault P."/>
            <person name="Vandenbol M."/>
            <person name="Weidner S."/>
            <person name="Galibert F."/>
        </authorList>
    </citation>
    <scope>NUCLEOTIDE SEQUENCE [LARGE SCALE GENOMIC DNA]</scope>
    <source>
        <strain>1021</strain>
    </source>
</reference>
<reference key="3">
    <citation type="journal article" date="2001" name="Science">
        <title>The composite genome of the legume symbiont Sinorhizobium meliloti.</title>
        <authorList>
            <person name="Galibert F."/>
            <person name="Finan T.M."/>
            <person name="Long S.R."/>
            <person name="Puehler A."/>
            <person name="Abola P."/>
            <person name="Ampe F."/>
            <person name="Barloy-Hubler F."/>
            <person name="Barnett M.J."/>
            <person name="Becker A."/>
            <person name="Boistard P."/>
            <person name="Bothe G."/>
            <person name="Boutry M."/>
            <person name="Bowser L."/>
            <person name="Buhrmester J."/>
            <person name="Cadieu E."/>
            <person name="Capela D."/>
            <person name="Chain P."/>
            <person name="Cowie A."/>
            <person name="Davis R.W."/>
            <person name="Dreano S."/>
            <person name="Federspiel N.A."/>
            <person name="Fisher R.F."/>
            <person name="Gloux S."/>
            <person name="Godrie T."/>
            <person name="Goffeau A."/>
            <person name="Golding B."/>
            <person name="Gouzy J."/>
            <person name="Gurjal M."/>
            <person name="Hernandez-Lucas I."/>
            <person name="Hong A."/>
            <person name="Huizar L."/>
            <person name="Hyman R.W."/>
            <person name="Jones T."/>
            <person name="Kahn D."/>
            <person name="Kahn M.L."/>
            <person name="Kalman S."/>
            <person name="Keating D.H."/>
            <person name="Kiss E."/>
            <person name="Komp C."/>
            <person name="Lelaure V."/>
            <person name="Masuy D."/>
            <person name="Palm C."/>
            <person name="Peck M.C."/>
            <person name="Pohl T.M."/>
            <person name="Portetelle D."/>
            <person name="Purnelle B."/>
            <person name="Ramsperger U."/>
            <person name="Surzycki R."/>
            <person name="Thebault P."/>
            <person name="Vandenbol M."/>
            <person name="Vorhoelter F.J."/>
            <person name="Weidner S."/>
            <person name="Wells D.H."/>
            <person name="Wong K."/>
            <person name="Yeh K.-C."/>
            <person name="Batut J."/>
        </authorList>
    </citation>
    <scope>NUCLEOTIDE SEQUENCE [LARGE SCALE GENOMIC DNA]</scope>
    <source>
        <strain>1021</strain>
    </source>
</reference>
<dbReference type="EMBL" id="AF055582">
    <property type="protein sequence ID" value="AAC62219.1"/>
    <property type="molecule type" value="Genomic_DNA"/>
</dbReference>
<dbReference type="EMBL" id="AL591688">
    <property type="protein sequence ID" value="CAC41473.1"/>
    <property type="molecule type" value="Genomic_DNA"/>
</dbReference>
<dbReference type="RefSeq" id="NP_384192.1">
    <property type="nucleotide sequence ID" value="NC_003047.1"/>
</dbReference>
<dbReference type="RefSeq" id="WP_003536327.1">
    <property type="nucleotide sequence ID" value="NC_003047.1"/>
</dbReference>
<dbReference type="SMR" id="O87389"/>
<dbReference type="EnsemblBacteria" id="CAC41473">
    <property type="protein sequence ID" value="CAC41473"/>
    <property type="gene ID" value="SMc02609"/>
</dbReference>
<dbReference type="KEGG" id="sme:SMc02609"/>
<dbReference type="PATRIC" id="fig|266834.11.peg.1443"/>
<dbReference type="eggNOG" id="COG4977">
    <property type="taxonomic scope" value="Bacteria"/>
</dbReference>
<dbReference type="HOGENOM" id="CLU_000445_59_0_5"/>
<dbReference type="OrthoDB" id="9793400at2"/>
<dbReference type="Proteomes" id="UP000001976">
    <property type="component" value="Chromosome"/>
</dbReference>
<dbReference type="GO" id="GO:0003700">
    <property type="term" value="F:DNA-binding transcription factor activity"/>
    <property type="evidence" value="ECO:0007669"/>
    <property type="project" value="InterPro"/>
</dbReference>
<dbReference type="GO" id="GO:0043565">
    <property type="term" value="F:sequence-specific DNA binding"/>
    <property type="evidence" value="ECO:0007669"/>
    <property type="project" value="InterPro"/>
</dbReference>
<dbReference type="CDD" id="cd03136">
    <property type="entry name" value="GATase1_AraC_ArgR_like"/>
    <property type="match status" value="1"/>
</dbReference>
<dbReference type="Gene3D" id="3.40.50.880">
    <property type="match status" value="1"/>
</dbReference>
<dbReference type="Gene3D" id="1.10.10.60">
    <property type="entry name" value="Homeodomain-like"/>
    <property type="match status" value="1"/>
</dbReference>
<dbReference type="InterPro" id="IPR029062">
    <property type="entry name" value="Class_I_gatase-like"/>
</dbReference>
<dbReference type="InterPro" id="IPR002818">
    <property type="entry name" value="DJ-1/PfpI"/>
</dbReference>
<dbReference type="InterPro" id="IPR009057">
    <property type="entry name" value="Homeodomain-like_sf"/>
</dbReference>
<dbReference type="InterPro" id="IPR018060">
    <property type="entry name" value="HTH_AraC"/>
</dbReference>
<dbReference type="InterPro" id="IPR018062">
    <property type="entry name" value="HTH_AraC-typ_CS"/>
</dbReference>
<dbReference type="InterPro" id="IPR052158">
    <property type="entry name" value="INH-QAR"/>
</dbReference>
<dbReference type="InterPro" id="IPR020449">
    <property type="entry name" value="Tscrpt_reg_AraC-type_HTH"/>
</dbReference>
<dbReference type="PANTHER" id="PTHR43130">
    <property type="entry name" value="ARAC-FAMILY TRANSCRIPTIONAL REGULATOR"/>
    <property type="match status" value="1"/>
</dbReference>
<dbReference type="PANTHER" id="PTHR43130:SF3">
    <property type="entry name" value="HTH-TYPE TRANSCRIPTIONAL REGULATOR RV1931C"/>
    <property type="match status" value="1"/>
</dbReference>
<dbReference type="Pfam" id="PF01965">
    <property type="entry name" value="DJ-1_PfpI"/>
    <property type="match status" value="1"/>
</dbReference>
<dbReference type="Pfam" id="PF12833">
    <property type="entry name" value="HTH_18"/>
    <property type="match status" value="1"/>
</dbReference>
<dbReference type="PRINTS" id="PR00032">
    <property type="entry name" value="HTHARAC"/>
</dbReference>
<dbReference type="SMART" id="SM00342">
    <property type="entry name" value="HTH_ARAC"/>
    <property type="match status" value="1"/>
</dbReference>
<dbReference type="SUPFAM" id="SSF52317">
    <property type="entry name" value="Class I glutamine amidotransferase-like"/>
    <property type="match status" value="1"/>
</dbReference>
<dbReference type="SUPFAM" id="SSF46689">
    <property type="entry name" value="Homeodomain-like"/>
    <property type="match status" value="2"/>
</dbReference>
<dbReference type="PROSITE" id="PS00041">
    <property type="entry name" value="HTH_ARAC_FAMILY_1"/>
    <property type="match status" value="1"/>
</dbReference>
<dbReference type="PROSITE" id="PS01124">
    <property type="entry name" value="HTH_ARAC_FAMILY_2"/>
    <property type="match status" value="1"/>
</dbReference>
<feature type="chain" id="PRO_0000194523" description="HTH-type transcriptional regulator GlxA">
    <location>
        <begin position="1"/>
        <end position="324"/>
    </location>
</feature>
<feature type="domain" description="HTH araC/xylS-type" evidence="1">
    <location>
        <begin position="223"/>
        <end position="321"/>
    </location>
</feature>
<feature type="DNA-binding region" description="H-T-H motif" evidence="1">
    <location>
        <begin position="240"/>
        <end position="261"/>
    </location>
</feature>
<feature type="DNA-binding region" description="H-T-H motif" evidence="1">
    <location>
        <begin position="288"/>
        <end position="311"/>
    </location>
</feature>
<proteinExistence type="predicted"/>
<name>GLXA_RHIME</name>
<keyword id="KW-0238">DNA-binding</keyword>
<keyword id="KW-1185">Reference proteome</keyword>
<keyword id="KW-0804">Transcription</keyword>
<keyword id="KW-0805">Transcription regulation</keyword>
<protein>
    <recommendedName>
        <fullName>HTH-type transcriptional regulator GlxA</fullName>
    </recommendedName>
</protein>
<gene>
    <name type="primary">glxA</name>
    <name type="ordered locus">R00086</name>
    <name type="ORF">SMc02609</name>
</gene>